<feature type="chain" id="PRO_1000069601" description="Regulatory ATPase RavA">
    <location>
        <begin position="1"/>
        <end position="498"/>
    </location>
</feature>
<feature type="binding site" evidence="1">
    <location>
        <position position="23"/>
    </location>
    <ligand>
        <name>ADP</name>
        <dbReference type="ChEBI" id="CHEBI:456216"/>
    </ligand>
</feature>
<feature type="binding site" evidence="1">
    <location>
        <position position="49"/>
    </location>
    <ligand>
        <name>ADP</name>
        <dbReference type="ChEBI" id="CHEBI:456216"/>
    </ligand>
</feature>
<feature type="binding site" evidence="1">
    <location>
        <position position="50"/>
    </location>
    <ligand>
        <name>ADP</name>
        <dbReference type="ChEBI" id="CHEBI:456216"/>
    </ligand>
</feature>
<feature type="binding site" evidence="1">
    <location>
        <position position="51"/>
    </location>
    <ligand>
        <name>ADP</name>
        <dbReference type="ChEBI" id="CHEBI:456216"/>
    </ligand>
</feature>
<feature type="binding site" evidence="1">
    <location>
        <position position="52"/>
    </location>
    <ligand>
        <name>ADP</name>
        <dbReference type="ChEBI" id="CHEBI:456216"/>
    </ligand>
</feature>
<feature type="binding site" evidence="1">
    <location>
        <position position="53"/>
    </location>
    <ligand>
        <name>ADP</name>
        <dbReference type="ChEBI" id="CHEBI:456216"/>
    </ligand>
</feature>
<feature type="binding site" evidence="1">
    <location>
        <position position="54"/>
    </location>
    <ligand>
        <name>ADP</name>
        <dbReference type="ChEBI" id="CHEBI:456216"/>
    </ligand>
</feature>
<feature type="binding site" evidence="1">
    <location>
        <position position="196"/>
    </location>
    <ligand>
        <name>ADP</name>
        <dbReference type="ChEBI" id="CHEBI:456216"/>
    </ligand>
</feature>
<keyword id="KW-0067">ATP-binding</keyword>
<keyword id="KW-0143">Chaperone</keyword>
<keyword id="KW-0963">Cytoplasm</keyword>
<keyword id="KW-0378">Hydrolase</keyword>
<keyword id="KW-0547">Nucleotide-binding</keyword>
<keyword id="KW-1185">Reference proteome</keyword>
<comment type="function">
    <text evidence="1">Component of the RavA-ViaA chaperone complex, which may act on the membrane to optimize the function of some of the respiratory chains. RavA functions as an ATPase.</text>
</comment>
<comment type="catalytic activity">
    <reaction evidence="1">
        <text>ATP + H2O = ADP + phosphate + H(+)</text>
        <dbReference type="Rhea" id="RHEA:13065"/>
        <dbReference type="ChEBI" id="CHEBI:15377"/>
        <dbReference type="ChEBI" id="CHEBI:15378"/>
        <dbReference type="ChEBI" id="CHEBI:30616"/>
        <dbReference type="ChEBI" id="CHEBI:43474"/>
        <dbReference type="ChEBI" id="CHEBI:456216"/>
    </reaction>
</comment>
<comment type="activity regulation">
    <text evidence="1">ATPase activity is stimulated by ViaA.</text>
</comment>
<comment type="subunit">
    <text evidence="1">Homohexamer. Interacts with ViaA.</text>
</comment>
<comment type="subcellular location">
    <subcellularLocation>
        <location evidence="1">Cytoplasm</location>
    </subcellularLocation>
</comment>
<comment type="similarity">
    <text evidence="1">Belongs to the RavA family.</text>
</comment>
<reference key="1">
    <citation type="journal article" date="2008" name="J. Bacteriol.">
        <title>The pangenome structure of Escherichia coli: comparative genomic analysis of E. coli commensal and pathogenic isolates.</title>
        <authorList>
            <person name="Rasko D.A."/>
            <person name="Rosovitz M.J."/>
            <person name="Myers G.S.A."/>
            <person name="Mongodin E.F."/>
            <person name="Fricke W.F."/>
            <person name="Gajer P."/>
            <person name="Crabtree J."/>
            <person name="Sebaihia M."/>
            <person name="Thomson N.R."/>
            <person name="Chaudhuri R."/>
            <person name="Henderson I.R."/>
            <person name="Sperandio V."/>
            <person name="Ravel J."/>
        </authorList>
    </citation>
    <scope>NUCLEOTIDE SEQUENCE [LARGE SCALE GENOMIC DNA]</scope>
    <source>
        <strain>E24377A / ETEC</strain>
    </source>
</reference>
<proteinExistence type="inferred from homology"/>
<name>RAVA_ECO24</name>
<organism>
    <name type="scientific">Escherichia coli O139:H28 (strain E24377A / ETEC)</name>
    <dbReference type="NCBI Taxonomy" id="331111"/>
    <lineage>
        <taxon>Bacteria</taxon>
        <taxon>Pseudomonadati</taxon>
        <taxon>Pseudomonadota</taxon>
        <taxon>Gammaproteobacteria</taxon>
        <taxon>Enterobacterales</taxon>
        <taxon>Enterobacteriaceae</taxon>
        <taxon>Escherichia</taxon>
    </lineage>
</organism>
<sequence>MAHPHLLAERISRLSSSLEKGLYERSHAIRLCLLAALSGESVFLLGPPGIAKSLIARRLKFAFQNARAFEYLMTRFSTPEEVFGPLSIQALKDEGRYERLTSGYLPEAEIVFLDEIWKAGPAILNTLLTAINERQFRNGAHVEKIPMRLLVAASNELPEADSSLEALYDRMLIRLWLDKVQDKANFRSMLTSQQDENDNPVPDALQVTDEEYERWQKEIGEITLPDHVFELIFMLRQQLDKLPDAPYVSDRRWKKAIRLLQASAFFSGRSAVAPVDLILLKDCLWYDAQSLNLIQQQIDVLMTGHAWQQQGMLTRLGAIVQRHLQLQQQQSDKTALTVIRLGGIFSRRQQYQLPVNVTASTLTLLLQKPLKLHDMEVVHISFERNALEQWLSKGGEIRGKLNGIGFAQKLNLEVDSAQHLVVRDVSLQGSTLALPGSSAEGLPGEIKQQLEELESDWRKQHALFSEQQKCLFIPGDWLGRIEASLQDVGAQIRQAQQC</sequence>
<evidence type="ECO:0000255" key="1">
    <source>
        <dbReference type="HAMAP-Rule" id="MF_01625"/>
    </source>
</evidence>
<dbReference type="EC" id="3.6.1.-" evidence="1"/>
<dbReference type="EMBL" id="CP000800">
    <property type="protein sequence ID" value="ABV19557.1"/>
    <property type="molecule type" value="Genomic_DNA"/>
</dbReference>
<dbReference type="RefSeq" id="WP_001315921.1">
    <property type="nucleotide sequence ID" value="NC_009801.1"/>
</dbReference>
<dbReference type="SMR" id="A7ZTV7"/>
<dbReference type="GeneID" id="75205464"/>
<dbReference type="KEGG" id="ecw:EcE24377A_4262"/>
<dbReference type="HOGENOM" id="CLU_018678_1_0_6"/>
<dbReference type="Proteomes" id="UP000001122">
    <property type="component" value="Chromosome"/>
</dbReference>
<dbReference type="GO" id="GO:0005737">
    <property type="term" value="C:cytoplasm"/>
    <property type="evidence" value="ECO:0007669"/>
    <property type="project" value="UniProtKB-SubCell"/>
</dbReference>
<dbReference type="GO" id="GO:0005524">
    <property type="term" value="F:ATP binding"/>
    <property type="evidence" value="ECO:0007669"/>
    <property type="project" value="UniProtKB-KW"/>
</dbReference>
<dbReference type="GO" id="GO:0016887">
    <property type="term" value="F:ATP hydrolysis activity"/>
    <property type="evidence" value="ECO:0007669"/>
    <property type="project" value="UniProtKB-UniRule"/>
</dbReference>
<dbReference type="CDD" id="cd00009">
    <property type="entry name" value="AAA"/>
    <property type="match status" value="1"/>
</dbReference>
<dbReference type="FunFam" id="3.40.50.300:FF:000410">
    <property type="entry name" value="ATPase RavA"/>
    <property type="match status" value="1"/>
</dbReference>
<dbReference type="Gene3D" id="1.20.58.1510">
    <property type="match status" value="1"/>
</dbReference>
<dbReference type="Gene3D" id="2.40.128.430">
    <property type="match status" value="1"/>
</dbReference>
<dbReference type="Gene3D" id="3.40.50.300">
    <property type="entry name" value="P-loop containing nucleotide triphosphate hydrolases"/>
    <property type="match status" value="1"/>
</dbReference>
<dbReference type="HAMAP" id="MF_01625">
    <property type="entry name" value="ATPase_RavA"/>
    <property type="match status" value="1"/>
</dbReference>
<dbReference type="InterPro" id="IPR003593">
    <property type="entry name" value="AAA+_ATPase"/>
</dbReference>
<dbReference type="InterPro" id="IPR023671">
    <property type="entry name" value="ATPase_RavA"/>
</dbReference>
<dbReference type="InterPro" id="IPR022547">
    <property type="entry name" value="ATPase_RavA_C"/>
</dbReference>
<dbReference type="InterPro" id="IPR045427">
    <property type="entry name" value="MoxR"/>
</dbReference>
<dbReference type="InterPro" id="IPR027417">
    <property type="entry name" value="P-loop_NTPase"/>
</dbReference>
<dbReference type="InterPro" id="IPR041538">
    <property type="entry name" value="RavA-like_AAA_lid"/>
</dbReference>
<dbReference type="InterPro" id="IPR050513">
    <property type="entry name" value="RavA_ATPases"/>
</dbReference>
<dbReference type="InterPro" id="IPR046898">
    <property type="entry name" value="RavA_LARA_dom"/>
</dbReference>
<dbReference type="InterPro" id="IPR046932">
    <property type="entry name" value="RavA_LARA_sf"/>
</dbReference>
<dbReference type="NCBIfam" id="NF010054">
    <property type="entry name" value="PRK13531.1"/>
    <property type="match status" value="1"/>
</dbReference>
<dbReference type="PANTHER" id="PTHR32204">
    <property type="entry name" value="ATPASE RAVA"/>
    <property type="match status" value="1"/>
</dbReference>
<dbReference type="PANTHER" id="PTHR32204:SF0">
    <property type="entry name" value="ATPASE RAVA"/>
    <property type="match status" value="1"/>
</dbReference>
<dbReference type="Pfam" id="PF17868">
    <property type="entry name" value="AAA_lid_8"/>
    <property type="match status" value="1"/>
</dbReference>
<dbReference type="Pfam" id="PF12592">
    <property type="entry name" value="ATPase_RavA_C"/>
    <property type="match status" value="1"/>
</dbReference>
<dbReference type="Pfam" id="PF20030">
    <property type="entry name" value="bpMoxR"/>
    <property type="match status" value="1"/>
</dbReference>
<dbReference type="Pfam" id="PF20265">
    <property type="entry name" value="LARA_dom"/>
    <property type="match status" value="1"/>
</dbReference>
<dbReference type="SMART" id="SM00382">
    <property type="entry name" value="AAA"/>
    <property type="match status" value="1"/>
</dbReference>
<dbReference type="SUPFAM" id="SSF52540">
    <property type="entry name" value="P-loop containing nucleoside triphosphate hydrolases"/>
    <property type="match status" value="1"/>
</dbReference>
<gene>
    <name evidence="1" type="primary">ravA</name>
    <name type="ordered locus">EcE24377A_4262</name>
</gene>
<protein>
    <recommendedName>
        <fullName evidence="1">Regulatory ATPase RavA</fullName>
        <ecNumber evidence="1">3.6.1.-</ecNumber>
    </recommendedName>
    <alternativeName>
        <fullName evidence="1">Regulatory ATPase variant A</fullName>
    </alternativeName>
</protein>
<accession>A7ZTV7</accession>